<comment type="function">
    <text evidence="1">Nucleoside triphosphate pyrophosphatase. May have a dual role in cell division arrest and in preventing the incorporation of modified nucleotides into cellular nucleic acids.</text>
</comment>
<comment type="catalytic activity">
    <reaction evidence="1">
        <text>a ribonucleoside 5'-triphosphate + H2O = a ribonucleoside 5'-phosphate + diphosphate + H(+)</text>
        <dbReference type="Rhea" id="RHEA:23996"/>
        <dbReference type="ChEBI" id="CHEBI:15377"/>
        <dbReference type="ChEBI" id="CHEBI:15378"/>
        <dbReference type="ChEBI" id="CHEBI:33019"/>
        <dbReference type="ChEBI" id="CHEBI:58043"/>
        <dbReference type="ChEBI" id="CHEBI:61557"/>
        <dbReference type="EC" id="3.6.1.9"/>
    </reaction>
</comment>
<comment type="catalytic activity">
    <reaction evidence="1">
        <text>a 2'-deoxyribonucleoside 5'-triphosphate + H2O = a 2'-deoxyribonucleoside 5'-phosphate + diphosphate + H(+)</text>
        <dbReference type="Rhea" id="RHEA:44644"/>
        <dbReference type="ChEBI" id="CHEBI:15377"/>
        <dbReference type="ChEBI" id="CHEBI:15378"/>
        <dbReference type="ChEBI" id="CHEBI:33019"/>
        <dbReference type="ChEBI" id="CHEBI:61560"/>
        <dbReference type="ChEBI" id="CHEBI:65317"/>
        <dbReference type="EC" id="3.6.1.9"/>
    </reaction>
</comment>
<comment type="cofactor">
    <cofactor evidence="1">
        <name>a divalent metal cation</name>
        <dbReference type="ChEBI" id="CHEBI:60240"/>
    </cofactor>
</comment>
<comment type="subcellular location">
    <subcellularLocation>
        <location evidence="1">Cytoplasm</location>
    </subcellularLocation>
</comment>
<comment type="similarity">
    <text evidence="1">Belongs to the Maf family.</text>
</comment>
<keyword id="KW-0963">Cytoplasm</keyword>
<keyword id="KW-0378">Hydrolase</keyword>
<keyword id="KW-0546">Nucleotide metabolism</keyword>
<keyword id="KW-1185">Reference proteome</keyword>
<organism>
    <name type="scientific">Leifsonia xyli subsp. xyli (strain CTCB07)</name>
    <dbReference type="NCBI Taxonomy" id="281090"/>
    <lineage>
        <taxon>Bacteria</taxon>
        <taxon>Bacillati</taxon>
        <taxon>Actinomycetota</taxon>
        <taxon>Actinomycetes</taxon>
        <taxon>Micrococcales</taxon>
        <taxon>Microbacteriaceae</taxon>
        <taxon>Leifsonia</taxon>
    </lineage>
</organism>
<proteinExistence type="inferred from homology"/>
<sequence length="215" mass="22704">MRLYLASTSPARLALLRAAGIEPVVVPSQVDEPAAVAAAEAEHGPLSPDAMVQLLARLKAEAVRGALDGEPIDGLVFGGDSAFAIDGALHGKPHRPEIARERWRAQRGRTGRLHSGHWLIDHRGGVENAAVGATAVAAVSFADVTDAEIDAYIASGEPLEVAGAFTIDSLGGPFIRRVEGDPSTVVGLSLSTLRDLVRQLRIEWTELWNRAGVSL</sequence>
<reference key="1">
    <citation type="journal article" date="2004" name="Mol. Plant Microbe Interact.">
        <title>The genome sequence of the Gram-positive sugarcane pathogen Leifsonia xyli subsp. xyli.</title>
        <authorList>
            <person name="Monteiro-Vitorello C.B."/>
            <person name="Camargo L.E.A."/>
            <person name="Van Sluys M.A."/>
            <person name="Kitajima J.P."/>
            <person name="Truffi D."/>
            <person name="do Amaral A.M."/>
            <person name="Harakava R."/>
            <person name="de Oliveira J.C.F."/>
            <person name="Wood D."/>
            <person name="de Oliveira M.C."/>
            <person name="Miyaki C.Y."/>
            <person name="Takita M.A."/>
            <person name="da Silva A.C.R."/>
            <person name="Furlan L.R."/>
            <person name="Carraro D.M."/>
            <person name="Camarotte G."/>
            <person name="Almeida N.F. Jr."/>
            <person name="Carrer H."/>
            <person name="Coutinho L.L."/>
            <person name="El-Dorry H.A."/>
            <person name="Ferro M.I.T."/>
            <person name="Gagliardi P.R."/>
            <person name="Giglioti E."/>
            <person name="Goldman M.H.S."/>
            <person name="Goldman G.H."/>
            <person name="Kimura E.T."/>
            <person name="Ferro E.S."/>
            <person name="Kuramae E.E."/>
            <person name="Lemos E.G.M."/>
            <person name="Lemos M.V.F."/>
            <person name="Mauro S.M.Z."/>
            <person name="Machado M.A."/>
            <person name="Marino C.L."/>
            <person name="Menck C.F."/>
            <person name="Nunes L.R."/>
            <person name="Oliveira R.C."/>
            <person name="Pereira G.G."/>
            <person name="Siqueira W."/>
            <person name="de Souza A.A."/>
            <person name="Tsai S.M."/>
            <person name="Zanca A.S."/>
            <person name="Simpson A.J.G."/>
            <person name="Brumbley S.M."/>
            <person name="Setubal J.C."/>
        </authorList>
    </citation>
    <scope>NUCLEOTIDE SEQUENCE [LARGE SCALE GENOMIC DNA]</scope>
    <source>
        <strain>CTCB07</strain>
    </source>
</reference>
<name>NTPP_LEIXX</name>
<gene>
    <name type="ordered locus">Lxx04750</name>
</gene>
<accession>Q6AGN3</accession>
<evidence type="ECO:0000255" key="1">
    <source>
        <dbReference type="HAMAP-Rule" id="MF_00528"/>
    </source>
</evidence>
<feature type="chain" id="PRO_0000267332" description="Nucleoside triphosphate pyrophosphatase">
    <location>
        <begin position="1"/>
        <end position="215"/>
    </location>
</feature>
<feature type="active site" description="Proton acceptor" evidence="1">
    <location>
        <position position="80"/>
    </location>
</feature>
<dbReference type="EC" id="3.6.1.9" evidence="1"/>
<dbReference type="EMBL" id="AE016822">
    <property type="protein sequence ID" value="AAT88462.1"/>
    <property type="molecule type" value="Genomic_DNA"/>
</dbReference>
<dbReference type="RefSeq" id="WP_011185463.1">
    <property type="nucleotide sequence ID" value="NC_006087.1"/>
</dbReference>
<dbReference type="SMR" id="Q6AGN3"/>
<dbReference type="STRING" id="281090.Lxx04750"/>
<dbReference type="KEGG" id="lxx:Lxx04750"/>
<dbReference type="eggNOG" id="COG0424">
    <property type="taxonomic scope" value="Bacteria"/>
</dbReference>
<dbReference type="HOGENOM" id="CLU_040416_1_2_11"/>
<dbReference type="Proteomes" id="UP000001306">
    <property type="component" value="Chromosome"/>
</dbReference>
<dbReference type="GO" id="GO:0005737">
    <property type="term" value="C:cytoplasm"/>
    <property type="evidence" value="ECO:0007669"/>
    <property type="project" value="UniProtKB-SubCell"/>
</dbReference>
<dbReference type="GO" id="GO:0047429">
    <property type="term" value="F:nucleoside triphosphate diphosphatase activity"/>
    <property type="evidence" value="ECO:0007669"/>
    <property type="project" value="UniProtKB-EC"/>
</dbReference>
<dbReference type="GO" id="GO:0009117">
    <property type="term" value="P:nucleotide metabolic process"/>
    <property type="evidence" value="ECO:0007669"/>
    <property type="project" value="UniProtKB-KW"/>
</dbReference>
<dbReference type="CDD" id="cd00555">
    <property type="entry name" value="Maf"/>
    <property type="match status" value="1"/>
</dbReference>
<dbReference type="Gene3D" id="3.90.950.10">
    <property type="match status" value="1"/>
</dbReference>
<dbReference type="HAMAP" id="MF_00528">
    <property type="entry name" value="Maf"/>
    <property type="match status" value="1"/>
</dbReference>
<dbReference type="InterPro" id="IPR029001">
    <property type="entry name" value="ITPase-like_fam"/>
</dbReference>
<dbReference type="InterPro" id="IPR003697">
    <property type="entry name" value="Maf-like"/>
</dbReference>
<dbReference type="NCBIfam" id="TIGR00172">
    <property type="entry name" value="maf"/>
    <property type="match status" value="1"/>
</dbReference>
<dbReference type="PANTHER" id="PTHR43213">
    <property type="entry name" value="BIFUNCTIONAL DTTP/UTP PYROPHOSPHATASE/METHYLTRANSFERASE PROTEIN-RELATED"/>
    <property type="match status" value="1"/>
</dbReference>
<dbReference type="PANTHER" id="PTHR43213:SF5">
    <property type="entry name" value="BIFUNCTIONAL DTTP_UTP PYROPHOSPHATASE_METHYLTRANSFERASE PROTEIN-RELATED"/>
    <property type="match status" value="1"/>
</dbReference>
<dbReference type="Pfam" id="PF02545">
    <property type="entry name" value="Maf"/>
    <property type="match status" value="1"/>
</dbReference>
<dbReference type="PIRSF" id="PIRSF006305">
    <property type="entry name" value="Maf"/>
    <property type="match status" value="1"/>
</dbReference>
<dbReference type="SUPFAM" id="SSF52972">
    <property type="entry name" value="ITPase-like"/>
    <property type="match status" value="1"/>
</dbReference>
<protein>
    <recommendedName>
        <fullName evidence="1">Nucleoside triphosphate pyrophosphatase</fullName>
        <ecNumber evidence="1">3.6.1.9</ecNumber>
    </recommendedName>
    <alternativeName>
        <fullName evidence="1">Nucleotide pyrophosphatase</fullName>
        <shortName evidence="1">Nucleotide PPase</shortName>
    </alternativeName>
</protein>